<gene>
    <name type="ordered locus">SAOUHSC_02789</name>
</gene>
<feature type="signal peptide" evidence="1">
    <location>
        <begin position="1"/>
        <end position="22"/>
    </location>
</feature>
<feature type="chain" id="PRO_0000282091" description="Uncharacterized lipoprotein SAOUHSC_02789">
    <location>
        <begin position="23"/>
        <end position="257"/>
    </location>
</feature>
<feature type="lipid moiety-binding region" description="N-palmitoyl cysteine" evidence="1">
    <location>
        <position position="23"/>
    </location>
</feature>
<feature type="lipid moiety-binding region" description="S-diacylglycerol cysteine" evidence="1">
    <location>
        <position position="23"/>
    </location>
</feature>
<organism>
    <name type="scientific">Staphylococcus aureus (strain NCTC 8325 / PS 47)</name>
    <dbReference type="NCBI Taxonomy" id="93061"/>
    <lineage>
        <taxon>Bacteria</taxon>
        <taxon>Bacillati</taxon>
        <taxon>Bacillota</taxon>
        <taxon>Bacilli</taxon>
        <taxon>Bacillales</taxon>
        <taxon>Staphylococcaceae</taxon>
        <taxon>Staphylococcus</taxon>
    </lineage>
</organism>
<sequence>MIHSKRLRLWLYLVLLAVFIGACGMKKEESSKDKQIKENFNKTLSLYPTKNLEDFYDKEGFRDQEFEKGDKGTWIIHSKMTIETNGKNMESRGLVLYVDRNTRTTKGEFIVRELWEDKKGYSRSKEKEYPVKMEHNKIIPTKPIADDKLRKEIENFKFFVQYGDFKDINDYKDGDISYNPNVPSYSAKYQLSNDDYNVKQLRKRYDIPTKKAPKLLIKGDGDLKGSSIGHKNLEFTFIENKEENIYFTDSINFKPTE</sequence>
<dbReference type="EMBL" id="CP000253">
    <property type="protein sequence ID" value="ABD31793.1"/>
    <property type="status" value="ALT_INIT"/>
    <property type="molecule type" value="Genomic_DNA"/>
</dbReference>
<dbReference type="RefSeq" id="WP_000711337.1">
    <property type="nucleotide sequence ID" value="NC_007795.1"/>
</dbReference>
<dbReference type="RefSeq" id="YP_501249.1">
    <property type="nucleotide sequence ID" value="NC_007795.1"/>
</dbReference>
<dbReference type="SMR" id="Q2FVC4"/>
<dbReference type="STRING" id="93061.SAOUHSC_02789"/>
<dbReference type="PaxDb" id="1280-SAXN108_2735"/>
<dbReference type="GeneID" id="3921444"/>
<dbReference type="KEGG" id="sao:SAOUHSC_02789"/>
<dbReference type="PATRIC" id="fig|93061.5.peg.2522"/>
<dbReference type="eggNOG" id="ENOG5033UD8">
    <property type="taxonomic scope" value="Bacteria"/>
</dbReference>
<dbReference type="HOGENOM" id="CLU_071589_0_0_9"/>
<dbReference type="OrthoDB" id="2189886at2"/>
<dbReference type="Proteomes" id="UP000008816">
    <property type="component" value="Chromosome"/>
</dbReference>
<dbReference type="GO" id="GO:0005886">
    <property type="term" value="C:plasma membrane"/>
    <property type="evidence" value="ECO:0007669"/>
    <property type="project" value="UniProtKB-SubCell"/>
</dbReference>
<dbReference type="Gene3D" id="2.50.20.40">
    <property type="match status" value="1"/>
</dbReference>
<dbReference type="InterPro" id="IPR007595">
    <property type="entry name" value="Csa"/>
</dbReference>
<dbReference type="InterPro" id="IPR038641">
    <property type="entry name" value="Csa_sf"/>
</dbReference>
<dbReference type="NCBIfam" id="TIGR01742">
    <property type="entry name" value="SA_tandem_lipo"/>
    <property type="match status" value="1"/>
</dbReference>
<dbReference type="Pfam" id="PF04507">
    <property type="entry name" value="DUF576"/>
    <property type="match status" value="1"/>
</dbReference>
<dbReference type="PROSITE" id="PS51257">
    <property type="entry name" value="PROKAR_LIPOPROTEIN"/>
    <property type="match status" value="1"/>
</dbReference>
<proteinExistence type="inferred from homology"/>
<reference key="1">
    <citation type="book" date="2006" name="Gram positive pathogens, 2nd edition">
        <title>The Staphylococcus aureus NCTC 8325 genome.</title>
        <editorList>
            <person name="Fischetti V."/>
            <person name="Novick R."/>
            <person name="Ferretti J."/>
            <person name="Portnoy D."/>
            <person name="Rood J."/>
        </editorList>
        <authorList>
            <person name="Gillaspy A.F."/>
            <person name="Worrell V."/>
            <person name="Orvis J."/>
            <person name="Roe B.A."/>
            <person name="Dyer D.W."/>
            <person name="Iandolo J.J."/>
        </authorList>
    </citation>
    <scope>NUCLEOTIDE SEQUENCE [LARGE SCALE GENOMIC DNA]</scope>
    <source>
        <strain>NCTC 8325 / PS 47</strain>
    </source>
</reference>
<evidence type="ECO:0000255" key="1">
    <source>
        <dbReference type="PROSITE-ProRule" id="PRU00303"/>
    </source>
</evidence>
<evidence type="ECO:0000305" key="2"/>
<name>Y2789_STAA8</name>
<accession>Q2FVC4</accession>
<keyword id="KW-1003">Cell membrane</keyword>
<keyword id="KW-0449">Lipoprotein</keyword>
<keyword id="KW-0472">Membrane</keyword>
<keyword id="KW-0564">Palmitate</keyword>
<keyword id="KW-1185">Reference proteome</keyword>
<keyword id="KW-0732">Signal</keyword>
<comment type="subcellular location">
    <subcellularLocation>
        <location evidence="1">Cell membrane</location>
        <topology evidence="1">Lipid-anchor</topology>
    </subcellularLocation>
</comment>
<comment type="similarity">
    <text evidence="2">Belongs to the staphylococcal tandem lipoprotein family.</text>
</comment>
<comment type="sequence caution" evidence="2">
    <conflict type="erroneous initiation">
        <sequence resource="EMBL-CDS" id="ABD31793"/>
    </conflict>
</comment>
<protein>
    <recommendedName>
        <fullName>Uncharacterized lipoprotein SAOUHSC_02789</fullName>
    </recommendedName>
</protein>